<name>PACC_ASPNG</name>
<feature type="chain" id="PRO_0000046821" description="pH-response transcription factor pacC/RIM101">
    <location>
        <begin position="1"/>
        <end position="667"/>
    </location>
</feature>
<feature type="zinc finger region" description="C2H2-type 1" evidence="2">
    <location>
        <begin position="70"/>
        <end position="95"/>
    </location>
</feature>
<feature type="zinc finger region" description="C2H2-type 2" evidence="2">
    <location>
        <begin position="106"/>
        <end position="130"/>
    </location>
</feature>
<feature type="zinc finger region" description="C2H2-type 3" evidence="2">
    <location>
        <begin position="136"/>
        <end position="158"/>
    </location>
</feature>
<feature type="region of interest" description="Disordered" evidence="3">
    <location>
        <begin position="1"/>
        <end position="45"/>
    </location>
</feature>
<feature type="region of interest" description="Disordered" evidence="3">
    <location>
        <begin position="371"/>
        <end position="537"/>
    </location>
</feature>
<feature type="region of interest" description="Disordered" evidence="3">
    <location>
        <begin position="597"/>
        <end position="667"/>
    </location>
</feature>
<feature type="short sequence motif" description="YPX[LI] motif 1">
    <location>
        <begin position="450"/>
        <end position="453"/>
    </location>
</feature>
<feature type="short sequence motif" description="YPX[LI] motif 2">
    <location>
        <begin position="652"/>
        <end position="655"/>
    </location>
</feature>
<feature type="compositionally biased region" description="Low complexity" evidence="3">
    <location>
        <begin position="7"/>
        <end position="45"/>
    </location>
</feature>
<feature type="compositionally biased region" description="Low complexity" evidence="3">
    <location>
        <begin position="391"/>
        <end position="400"/>
    </location>
</feature>
<feature type="compositionally biased region" description="Polar residues" evidence="3">
    <location>
        <begin position="404"/>
        <end position="438"/>
    </location>
</feature>
<feature type="compositionally biased region" description="Basic and acidic residues" evidence="3">
    <location>
        <begin position="513"/>
        <end position="529"/>
    </location>
</feature>
<feature type="compositionally biased region" description="Basic and acidic residues" evidence="3">
    <location>
        <begin position="622"/>
        <end position="646"/>
    </location>
</feature>
<feature type="compositionally biased region" description="Basic and acidic residues" evidence="3">
    <location>
        <begin position="657"/>
        <end position="667"/>
    </location>
</feature>
<organism>
    <name type="scientific">Aspergillus niger</name>
    <dbReference type="NCBI Taxonomy" id="5061"/>
    <lineage>
        <taxon>Eukaryota</taxon>
        <taxon>Fungi</taxon>
        <taxon>Dikarya</taxon>
        <taxon>Ascomycota</taxon>
        <taxon>Pezizomycotina</taxon>
        <taxon>Eurotiomycetes</taxon>
        <taxon>Eurotiomycetidae</taxon>
        <taxon>Eurotiales</taxon>
        <taxon>Aspergillaceae</taxon>
        <taxon>Aspergillus</taxon>
        <taxon>Aspergillus subgen. Circumdati</taxon>
    </lineage>
</organism>
<accession>Q00203</accession>
<reference key="1">
    <citation type="journal article" date="1996" name="Mol. Gen. Genet.">
        <title>Identification, cloning and analysis of the Aspergillus niger gene pacC, a wide domain regulatory gene responsive to ambient pH.</title>
        <authorList>
            <person name="MacCabe A.P."/>
            <person name="van den Hombergh J.P.T.W."/>
            <person name="Tilburn J."/>
            <person name="Arst H.N. Jr."/>
            <person name="Visser J."/>
        </authorList>
    </citation>
    <scope>NUCLEOTIDE SEQUENCE [GENOMIC DNA]</scope>
    <scope>INDUCTION</scope>
    <source>
        <strain>ATCC 9029 / NRRL 3 / CBS 120.49 / DSM 2466 / N400 / FGSC 732</strain>
    </source>
</reference>
<keyword id="KW-0010">Activator</keyword>
<keyword id="KW-0963">Cytoplasm</keyword>
<keyword id="KW-0238">DNA-binding</keyword>
<keyword id="KW-0479">Metal-binding</keyword>
<keyword id="KW-0539">Nucleus</keyword>
<keyword id="KW-0677">Repeat</keyword>
<keyword id="KW-0678">Repressor</keyword>
<keyword id="KW-0804">Transcription</keyword>
<keyword id="KW-0805">Transcription regulation</keyword>
<keyword id="KW-0862">Zinc</keyword>
<keyword id="KW-0863">Zinc-finger</keyword>
<proteinExistence type="evidence at transcript level"/>
<gene>
    <name type="primary">PACC</name>
</gene>
<dbReference type="EMBL" id="X98417">
    <property type="protein sequence ID" value="CAA67063.1"/>
    <property type="molecule type" value="Genomic_DNA"/>
</dbReference>
<dbReference type="PIR" id="S63587">
    <property type="entry name" value="S63587"/>
</dbReference>
<dbReference type="PaxDb" id="5061-CADANGAP00002242"/>
<dbReference type="VEuPathDB" id="FungiDB:An02g07890"/>
<dbReference type="VEuPathDB" id="FungiDB:ASPNIDRAFT2_1184997"/>
<dbReference type="VEuPathDB" id="FungiDB:ATCC64974_56280"/>
<dbReference type="VEuPathDB" id="FungiDB:M747DRAFT_260517"/>
<dbReference type="eggNOG" id="KOG1721">
    <property type="taxonomic scope" value="Eukaryota"/>
</dbReference>
<dbReference type="GO" id="GO:0005737">
    <property type="term" value="C:cytoplasm"/>
    <property type="evidence" value="ECO:0007669"/>
    <property type="project" value="UniProtKB-SubCell"/>
</dbReference>
<dbReference type="GO" id="GO:0005634">
    <property type="term" value="C:nucleus"/>
    <property type="evidence" value="ECO:0007669"/>
    <property type="project" value="UniProtKB-SubCell"/>
</dbReference>
<dbReference type="GO" id="GO:0003677">
    <property type="term" value="F:DNA binding"/>
    <property type="evidence" value="ECO:0007669"/>
    <property type="project" value="UniProtKB-KW"/>
</dbReference>
<dbReference type="GO" id="GO:0008270">
    <property type="term" value="F:zinc ion binding"/>
    <property type="evidence" value="ECO:0007669"/>
    <property type="project" value="UniProtKB-KW"/>
</dbReference>
<dbReference type="GO" id="GO:0045944">
    <property type="term" value="P:positive regulation of transcription by RNA polymerase II"/>
    <property type="evidence" value="ECO:0007669"/>
    <property type="project" value="TreeGrafter"/>
</dbReference>
<dbReference type="FunFam" id="3.30.160.60:FF:000993">
    <property type="entry name" value="pH-response transcription factor pacC/RIM101"/>
    <property type="match status" value="1"/>
</dbReference>
<dbReference type="FunFam" id="3.30.160.60:FF:001369">
    <property type="entry name" value="pH-response transcription factor pacC/RIM101"/>
    <property type="match status" value="1"/>
</dbReference>
<dbReference type="Gene3D" id="3.30.160.60">
    <property type="entry name" value="Classic Zinc Finger"/>
    <property type="match status" value="2"/>
</dbReference>
<dbReference type="InterPro" id="IPR050806">
    <property type="entry name" value="pacC/RIM101"/>
</dbReference>
<dbReference type="InterPro" id="IPR036236">
    <property type="entry name" value="Znf_C2H2_sf"/>
</dbReference>
<dbReference type="InterPro" id="IPR013087">
    <property type="entry name" value="Znf_C2H2_type"/>
</dbReference>
<dbReference type="PANTHER" id="PTHR47257">
    <property type="entry name" value="PH-RESPONSE TRANSCRIPTION FACTOR PACC/RIM101"/>
    <property type="match status" value="1"/>
</dbReference>
<dbReference type="PANTHER" id="PTHR47257:SF1">
    <property type="entry name" value="PH-RESPONSE TRANSCRIPTION FACTOR PACC_RIM101"/>
    <property type="match status" value="1"/>
</dbReference>
<dbReference type="SMART" id="SM00355">
    <property type="entry name" value="ZnF_C2H2"/>
    <property type="match status" value="3"/>
</dbReference>
<dbReference type="SUPFAM" id="SSF57667">
    <property type="entry name" value="beta-beta-alpha zinc fingers"/>
    <property type="match status" value="1"/>
</dbReference>
<dbReference type="PROSITE" id="PS00028">
    <property type="entry name" value="ZINC_FINGER_C2H2_1"/>
    <property type="match status" value="2"/>
</dbReference>
<dbReference type="PROSITE" id="PS50157">
    <property type="entry name" value="ZINC_FINGER_C2H2_2"/>
    <property type="match status" value="2"/>
</dbReference>
<protein>
    <recommendedName>
        <fullName>pH-response transcription factor pacC/RIM101</fullName>
    </recommendedName>
</protein>
<sequence length="667" mass="70901">MSEPQDTTTAPSTTAAPMPTSTSQDSPSAQQPAQVSSATAASAAATAAAASAAVANPPMNGTTTRPSEELSCLWQGCSEKCPSPEALYEHVCERHVGRKSTNNLNLTCQWGSCRTTTVKRDHITSHIRVHVPLKPHKCDFCGKAFKRPQDLKKHVKTHADDSVLVRSPEPGARNPDMMFGGGAKGYATAAHYFEPALNAVPSQGYAHGAPQYYQSHPPPQPANPSYGNVYYALNHGPEAGHASYESKKRGYDALNEFFGDLKRRQFDPNSYAAVGQRLLGLQSLSLPVLSSGPLPEYQPMPAPVAVGGGGYSPGGAPSAPAYHLPPMSNVRTKNDLINIDQFLQQMQDTIYENDDNVAAAGVAQPGAHYVHGGMSYRTTHSPPTQLPPSHATATSSASMMPNPATHSPSTGTPALTPPSSAQSYTSGRSPVSLPSATRVSPPHHEGGSMYPRLPSATMADSMAAGYPTASSTAPPSTLGGIFDHDDRRRYTGGTLQRARPETRQLSEEMDLTQDSKDEGERTPKAKEHSSPSSPERISASLIDPALSGTAAEAEATLRTAQAATEVAERADVQWVEKVRLIEYLRNYIASRLERGEFENNESGGGNSSSNGSSHEQTPEASPDTHMEGVESEVPSKAEEPAVKPEAGDVVMYPTLRAVDEDGDSKMP</sequence>
<evidence type="ECO:0000250" key="1"/>
<evidence type="ECO:0000255" key="2">
    <source>
        <dbReference type="PROSITE-ProRule" id="PRU00042"/>
    </source>
</evidence>
<evidence type="ECO:0000256" key="3">
    <source>
        <dbReference type="SAM" id="MobiDB-lite"/>
    </source>
</evidence>
<evidence type="ECO:0000269" key="4">
    <source>
    </source>
</evidence>
<evidence type="ECO:0000305" key="5"/>
<comment type="function">
    <text evidence="1">Transcription factor that mediates regulation of both acid- and alkaline-expressed genes in response to ambient pH. At alkaline ambient pH, activates transcription of alkaline-expressed genes (including PACC itself) and represses transcription of acid-expressed genes (By similarity).</text>
</comment>
<comment type="subcellular location">
    <subcellularLocation>
        <location evidence="1">Cytoplasm</location>
    </subcellularLocation>
    <subcellularLocation>
        <location evidence="1">Nucleus</location>
    </subcellularLocation>
</comment>
<comment type="induction">
    <text evidence="4">By alkaline conditions.</text>
</comment>
<comment type="PTM">
    <text evidence="1">Activated by C-terminal proteolytic cleavage by signaling protease (probably palB/RIM13) at neutral to alkaline ambient pH.</text>
</comment>
<comment type="similarity">
    <text evidence="5">Belongs to the pacC/RIM101 family.</text>
</comment>